<proteinExistence type="evidence at transcript level"/>
<comment type="similarity">
    <text evidence="1">Belongs to the PPR family. P subfamily.</text>
</comment>
<comment type="online information" name="Pentatricopeptide repeat proteins">
    <link uri="https://ppr.plantenergy.uwa.edu.au"/>
</comment>
<reference key="1">
    <citation type="journal article" date="2000" name="Nature">
        <title>Sequence and analysis of chromosome 1 of the plant Arabidopsis thaliana.</title>
        <authorList>
            <person name="Theologis A."/>
            <person name="Ecker J.R."/>
            <person name="Palm C.J."/>
            <person name="Federspiel N.A."/>
            <person name="Kaul S."/>
            <person name="White O."/>
            <person name="Alonso J."/>
            <person name="Altafi H."/>
            <person name="Araujo R."/>
            <person name="Bowman C.L."/>
            <person name="Brooks S.Y."/>
            <person name="Buehler E."/>
            <person name="Chan A."/>
            <person name="Chao Q."/>
            <person name="Chen H."/>
            <person name="Cheuk R.F."/>
            <person name="Chin C.W."/>
            <person name="Chung M.K."/>
            <person name="Conn L."/>
            <person name="Conway A.B."/>
            <person name="Conway A.R."/>
            <person name="Creasy T.H."/>
            <person name="Dewar K."/>
            <person name="Dunn P."/>
            <person name="Etgu P."/>
            <person name="Feldblyum T.V."/>
            <person name="Feng J.-D."/>
            <person name="Fong B."/>
            <person name="Fujii C.Y."/>
            <person name="Gill J.E."/>
            <person name="Goldsmith A.D."/>
            <person name="Haas B."/>
            <person name="Hansen N.F."/>
            <person name="Hughes B."/>
            <person name="Huizar L."/>
            <person name="Hunter J.L."/>
            <person name="Jenkins J."/>
            <person name="Johnson-Hopson C."/>
            <person name="Khan S."/>
            <person name="Khaykin E."/>
            <person name="Kim C.J."/>
            <person name="Koo H.L."/>
            <person name="Kremenetskaia I."/>
            <person name="Kurtz D.B."/>
            <person name="Kwan A."/>
            <person name="Lam B."/>
            <person name="Langin-Hooper S."/>
            <person name="Lee A."/>
            <person name="Lee J.M."/>
            <person name="Lenz C.A."/>
            <person name="Li J.H."/>
            <person name="Li Y.-P."/>
            <person name="Lin X."/>
            <person name="Liu S.X."/>
            <person name="Liu Z.A."/>
            <person name="Luros J.S."/>
            <person name="Maiti R."/>
            <person name="Marziali A."/>
            <person name="Militscher J."/>
            <person name="Miranda M."/>
            <person name="Nguyen M."/>
            <person name="Nierman W.C."/>
            <person name="Osborne B.I."/>
            <person name="Pai G."/>
            <person name="Peterson J."/>
            <person name="Pham P.K."/>
            <person name="Rizzo M."/>
            <person name="Rooney T."/>
            <person name="Rowley D."/>
            <person name="Sakano H."/>
            <person name="Salzberg S.L."/>
            <person name="Schwartz J.R."/>
            <person name="Shinn P."/>
            <person name="Southwick A.M."/>
            <person name="Sun H."/>
            <person name="Tallon L.J."/>
            <person name="Tambunga G."/>
            <person name="Toriumi M.J."/>
            <person name="Town C.D."/>
            <person name="Utterback T."/>
            <person name="Van Aken S."/>
            <person name="Vaysberg M."/>
            <person name="Vysotskaia V.S."/>
            <person name="Walker M."/>
            <person name="Wu D."/>
            <person name="Yu G."/>
            <person name="Fraser C.M."/>
            <person name="Venter J.C."/>
            <person name="Davis R.W."/>
        </authorList>
    </citation>
    <scope>NUCLEOTIDE SEQUENCE [LARGE SCALE GENOMIC DNA]</scope>
    <source>
        <strain>cv. Columbia</strain>
    </source>
</reference>
<reference key="2">
    <citation type="journal article" date="2017" name="Plant J.">
        <title>Araport11: a complete reannotation of the Arabidopsis thaliana reference genome.</title>
        <authorList>
            <person name="Cheng C.Y."/>
            <person name="Krishnakumar V."/>
            <person name="Chan A.P."/>
            <person name="Thibaud-Nissen F."/>
            <person name="Schobel S."/>
            <person name="Town C.D."/>
        </authorList>
    </citation>
    <scope>GENOME REANNOTATION</scope>
    <source>
        <strain>cv. Columbia</strain>
    </source>
</reference>
<reference key="3">
    <citation type="journal article" date="2004" name="Plant Cell">
        <title>Genome-wide analysis of Arabidopsis pentatricopeptide repeat proteins reveals their essential role in organelle biogenesis.</title>
        <authorList>
            <person name="Lurin C."/>
            <person name="Andres C."/>
            <person name="Aubourg S."/>
            <person name="Bellaoui M."/>
            <person name="Bitton F."/>
            <person name="Bruyere C."/>
            <person name="Caboche M."/>
            <person name="Debast C."/>
            <person name="Gualberto J."/>
            <person name="Hoffmann B."/>
            <person name="Lecharny A."/>
            <person name="Le Ret M."/>
            <person name="Martin-Magniette M.-L."/>
            <person name="Mireau H."/>
            <person name="Peeters N."/>
            <person name="Renou J.-P."/>
            <person name="Szurek B."/>
            <person name="Taconnat L."/>
            <person name="Small I."/>
        </authorList>
    </citation>
    <scope>GENE FAMILY</scope>
</reference>
<sequence>MSKTLLSRIKPLSNPHASNSFRSHLPITPRIKKLVSDTVSILKTQQNWSQILDDCFADEEVRFVDISPFVFDRIQDVEIGVKLFDWLSSEKKDEFFSNGFACSSFLKLLARYRIFNEIEDVLGNLRNENVKLTHEALSHVLHAYAESGSLSKAVEIYDYVVELYDSVPDVIACNSLLSLLVKSRRLGDARKVYDEMCDRGDSVDNYSTCILVKGMCNEGKVEVGRKLIEGRWGKGCIPNIVFYNTIIGGYCKLGDIENAYLVFKELKLKGFMPTLETFGTMINGFCKEGDFVASDRLLSEVKERGLRVSVWFLNNIIDAKYRHGYKVDPAESIGWIIANDCKPDVATYNILINRLCKEGKKEVAVGFLDEASKKGLIPNNLSYAPLIQAYCKSKEYDIASKLLLQMAERGCKPDIVTYGILIHGLVVSGHMDDAVNMKVKLIDRGVSPDAAIYNMLMSGLCKTGRFLPAKLLFSEMLDRNILPDAYVYATLIDGFIRSGDFDEARKVFSLSVEKGVKVDVVHHNAMIKGFCRSGMLDEALACMNRMNEEHLVPDKFTYSTIIDGYVKQQDMATAIKIFRYMEKNKCKPNVVTYTSLINGFCCQGDFKMAEETFKEMQLRDLVPNVVTYTTLIRSLAKESSTLEKAVYYWELMMTNKCVPNEVTFNCLLQGFVKKTSGKVLAEPDGSNHGQSSLFSEFFHRMKSDGWSDHAAAYNSALVCLCVHGMVKTACMFQDKMVKKGFSPDPVSFAAILHGFCVVGNSKQWRNMDFCNLGEKGLEVAVRYSQVLEQHLPQPVICEASTILHAMVEKADTKEPVESP</sequence>
<protein>
    <recommendedName>
        <fullName>Pentatricopeptide repeat-containing protein At1g52620</fullName>
    </recommendedName>
</protein>
<gene>
    <name type="ordered locus">At1g52620</name>
    <name type="ORF">F6D8.16</name>
</gene>
<name>PPR77_ARATH</name>
<organism>
    <name type="scientific">Arabidopsis thaliana</name>
    <name type="common">Mouse-ear cress</name>
    <dbReference type="NCBI Taxonomy" id="3702"/>
    <lineage>
        <taxon>Eukaryota</taxon>
        <taxon>Viridiplantae</taxon>
        <taxon>Streptophyta</taxon>
        <taxon>Embryophyta</taxon>
        <taxon>Tracheophyta</taxon>
        <taxon>Spermatophyta</taxon>
        <taxon>Magnoliopsida</taxon>
        <taxon>eudicotyledons</taxon>
        <taxon>Gunneridae</taxon>
        <taxon>Pentapetalae</taxon>
        <taxon>rosids</taxon>
        <taxon>malvids</taxon>
        <taxon>Brassicales</taxon>
        <taxon>Brassicaceae</taxon>
        <taxon>Camelineae</taxon>
        <taxon>Arabidopsis</taxon>
    </lineage>
</organism>
<feature type="chain" id="PRO_0000342818" description="Pentatricopeptide repeat-containing protein At1g52620">
    <location>
        <begin position="1"/>
        <end position="819"/>
    </location>
</feature>
<feature type="repeat" description="PPR 1">
    <location>
        <begin position="98"/>
        <end position="132"/>
    </location>
</feature>
<feature type="repeat" description="PPR 2">
    <location>
        <begin position="133"/>
        <end position="163"/>
    </location>
</feature>
<feature type="repeat" description="PPR 3">
    <location>
        <begin position="169"/>
        <end position="203"/>
    </location>
</feature>
<feature type="repeat" description="PPR 4">
    <location>
        <begin position="204"/>
        <end position="238"/>
    </location>
</feature>
<feature type="repeat" description="PPR 5">
    <location>
        <begin position="239"/>
        <end position="273"/>
    </location>
</feature>
<feature type="repeat" description="PPR 6">
    <location>
        <begin position="274"/>
        <end position="308"/>
    </location>
</feature>
<feature type="repeat" description="PPR 7">
    <location>
        <begin position="309"/>
        <end position="343"/>
    </location>
</feature>
<feature type="repeat" description="PPR 8">
    <location>
        <begin position="344"/>
        <end position="378"/>
    </location>
</feature>
<feature type="repeat" description="PPR 9">
    <location>
        <begin position="379"/>
        <end position="413"/>
    </location>
</feature>
<feature type="repeat" description="PPR 10">
    <location>
        <begin position="414"/>
        <end position="448"/>
    </location>
</feature>
<feature type="repeat" description="PPR 11">
    <location>
        <begin position="449"/>
        <end position="483"/>
    </location>
</feature>
<feature type="repeat" description="PPR 12">
    <location>
        <begin position="484"/>
        <end position="518"/>
    </location>
</feature>
<feature type="repeat" description="PPR 13">
    <location>
        <begin position="519"/>
        <end position="553"/>
    </location>
</feature>
<feature type="repeat" description="PPR 14">
    <location>
        <begin position="554"/>
        <end position="588"/>
    </location>
</feature>
<feature type="repeat" description="PPR 15">
    <location>
        <begin position="589"/>
        <end position="623"/>
    </location>
</feature>
<feature type="repeat" description="PPR 16">
    <location>
        <begin position="624"/>
        <end position="659"/>
    </location>
</feature>
<feature type="repeat" description="PPR 17">
    <location>
        <begin position="709"/>
        <end position="743"/>
    </location>
</feature>
<feature type="repeat" description="PPR 18">
    <location>
        <begin position="744"/>
        <end position="779"/>
    </location>
</feature>
<accession>Q9SSR4</accession>
<evidence type="ECO:0000305" key="1"/>
<keyword id="KW-1185">Reference proteome</keyword>
<keyword id="KW-0677">Repeat</keyword>
<dbReference type="EMBL" id="AC008016">
    <property type="protein sequence ID" value="AAD55603.1"/>
    <property type="molecule type" value="Genomic_DNA"/>
</dbReference>
<dbReference type="EMBL" id="CP002684">
    <property type="protein sequence ID" value="AEE32830.1"/>
    <property type="molecule type" value="Genomic_DNA"/>
</dbReference>
<dbReference type="PIR" id="A96567">
    <property type="entry name" value="A96567"/>
</dbReference>
<dbReference type="RefSeq" id="NP_175671.1">
    <property type="nucleotide sequence ID" value="NM_104140.3"/>
</dbReference>
<dbReference type="SMR" id="Q9SSR4"/>
<dbReference type="FunCoup" id="Q9SSR4">
    <property type="interactions" value="812"/>
</dbReference>
<dbReference type="STRING" id="3702.Q9SSR4"/>
<dbReference type="iPTMnet" id="Q9SSR4"/>
<dbReference type="PaxDb" id="3702-AT1G52620.1"/>
<dbReference type="ProteomicsDB" id="236656"/>
<dbReference type="EnsemblPlants" id="AT1G52620.1">
    <property type="protein sequence ID" value="AT1G52620.1"/>
    <property type="gene ID" value="AT1G52620"/>
</dbReference>
<dbReference type="GeneID" id="841694"/>
<dbReference type="Gramene" id="AT1G52620.1">
    <property type="protein sequence ID" value="AT1G52620.1"/>
    <property type="gene ID" value="AT1G52620"/>
</dbReference>
<dbReference type="KEGG" id="ath:AT1G52620"/>
<dbReference type="Araport" id="AT1G52620"/>
<dbReference type="TAIR" id="AT1G52620">
    <property type="gene designation" value="PPR19"/>
</dbReference>
<dbReference type="eggNOG" id="KOG4197">
    <property type="taxonomic scope" value="Eukaryota"/>
</dbReference>
<dbReference type="HOGENOM" id="CLU_002706_49_12_1"/>
<dbReference type="InParanoid" id="Q9SSR4"/>
<dbReference type="OMA" id="MHAYCKQ"/>
<dbReference type="PhylomeDB" id="Q9SSR4"/>
<dbReference type="PRO" id="PR:Q9SSR4"/>
<dbReference type="Proteomes" id="UP000006548">
    <property type="component" value="Chromosome 1"/>
</dbReference>
<dbReference type="ExpressionAtlas" id="Q9SSR4">
    <property type="expression patterns" value="baseline and differential"/>
</dbReference>
<dbReference type="GO" id="GO:0005739">
    <property type="term" value="C:mitochondrion"/>
    <property type="evidence" value="ECO:0000314"/>
    <property type="project" value="TAIR"/>
</dbReference>
<dbReference type="GO" id="GO:1990825">
    <property type="term" value="F:sequence-specific mRNA binding"/>
    <property type="evidence" value="ECO:0000314"/>
    <property type="project" value="TAIR"/>
</dbReference>
<dbReference type="GO" id="GO:0032981">
    <property type="term" value="P:mitochondrial respiratory chain complex I assembly"/>
    <property type="evidence" value="ECO:0000315"/>
    <property type="project" value="TAIR"/>
</dbReference>
<dbReference type="GO" id="GO:0000963">
    <property type="term" value="P:mitochondrial RNA processing"/>
    <property type="evidence" value="ECO:0000315"/>
    <property type="project" value="TAIR"/>
</dbReference>
<dbReference type="GO" id="GO:0008380">
    <property type="term" value="P:RNA splicing"/>
    <property type="evidence" value="ECO:0000314"/>
    <property type="project" value="TAIR"/>
</dbReference>
<dbReference type="FunFam" id="1.25.40.10:FF:000558">
    <property type="entry name" value="Pentatricopeptide repeat-containing protein At5g39710"/>
    <property type="match status" value="2"/>
</dbReference>
<dbReference type="Gene3D" id="1.25.40.10">
    <property type="entry name" value="Tetratricopeptide repeat domain"/>
    <property type="match status" value="7"/>
</dbReference>
<dbReference type="InterPro" id="IPR002885">
    <property type="entry name" value="Pentatricopeptide_rpt"/>
</dbReference>
<dbReference type="InterPro" id="IPR011990">
    <property type="entry name" value="TPR-like_helical_dom_sf"/>
</dbReference>
<dbReference type="NCBIfam" id="TIGR00756">
    <property type="entry name" value="PPR"/>
    <property type="match status" value="13"/>
</dbReference>
<dbReference type="PANTHER" id="PTHR47932">
    <property type="entry name" value="ATPASE EXPRESSION PROTEIN 3"/>
    <property type="match status" value="1"/>
</dbReference>
<dbReference type="PANTHER" id="PTHR47932:SF2">
    <property type="entry name" value="OS10G0484300 PROTEIN"/>
    <property type="match status" value="1"/>
</dbReference>
<dbReference type="Pfam" id="PF12854">
    <property type="entry name" value="PPR_1"/>
    <property type="match status" value="2"/>
</dbReference>
<dbReference type="Pfam" id="PF13041">
    <property type="entry name" value="PPR_2"/>
    <property type="match status" value="6"/>
</dbReference>
<dbReference type="Pfam" id="PF13812">
    <property type="entry name" value="PPR_3"/>
    <property type="match status" value="1"/>
</dbReference>
<dbReference type="SUPFAM" id="SSF81901">
    <property type="entry name" value="HCP-like"/>
    <property type="match status" value="2"/>
</dbReference>
<dbReference type="PROSITE" id="PS51375">
    <property type="entry name" value="PPR"/>
    <property type="match status" value="17"/>
</dbReference>